<keyword id="KW-0903">Direct protein sequencing</keyword>
<keyword id="KW-1015">Disulfide bond</keyword>
<keyword id="KW-1185">Reference proteome</keyword>
<keyword id="KW-0964">Secreted</keyword>
<keyword id="KW-0716">Sensory transduction</keyword>
<keyword id="KW-0732">Signal</keyword>
<keyword id="KW-0919">Taste</keyword>
<keyword id="KW-0813">Transport</keyword>
<organism>
    <name type="scientific">Rattus norvegicus</name>
    <name type="common">Rat</name>
    <dbReference type="NCBI Taxonomy" id="10116"/>
    <lineage>
        <taxon>Eukaryota</taxon>
        <taxon>Metazoa</taxon>
        <taxon>Chordata</taxon>
        <taxon>Craniata</taxon>
        <taxon>Vertebrata</taxon>
        <taxon>Euteleostomi</taxon>
        <taxon>Mammalia</taxon>
        <taxon>Eutheria</taxon>
        <taxon>Euarchontoglires</taxon>
        <taxon>Glires</taxon>
        <taxon>Rodentia</taxon>
        <taxon>Myomorpha</taxon>
        <taxon>Muroidea</taxon>
        <taxon>Muridae</taxon>
        <taxon>Murinae</taxon>
        <taxon>Rattus</taxon>
    </lineage>
</organism>
<protein>
    <recommendedName>
        <fullName>von Ebner gland protein 2</fullName>
        <shortName>VEG protein 2</shortName>
    </recommendedName>
</protein>
<comment type="function">
    <text>Could play a role in taste reception. Could be necessary for the concentration and delivery of sapid molecules in the gustatory system.</text>
</comment>
<comment type="subunit">
    <text evidence="1">Homodimer.</text>
</comment>
<comment type="subcellular location">
    <subcellularLocation>
        <location>Secreted</location>
    </subcellularLocation>
</comment>
<comment type="similarity">
    <text evidence="3">Belongs to the calycin superfamily. Lipocalin family.</text>
</comment>
<name>VEGP2_RAT</name>
<feature type="signal peptide" evidence="2">
    <location>
        <begin position="1"/>
        <end position="18"/>
    </location>
</feature>
<feature type="chain" id="PRO_0000017977" description="von Ebner gland protein 2">
    <location>
        <begin position="19"/>
        <end position="177"/>
    </location>
</feature>
<feature type="disulfide bond" evidence="1">
    <location>
        <begin position="80"/>
        <end position="172"/>
    </location>
</feature>
<accession>P41244</accession>
<evidence type="ECO:0000250" key="1"/>
<evidence type="ECO:0000255" key="2"/>
<evidence type="ECO:0000305" key="3"/>
<sequence length="177" mass="19699">MKALLLTFSLSLLAALQAQAFPTTEENQDVSGTWYLKAAAWDKEIPDKKFGSVSVTPMKIKTLEGGNLQVKFTVLISGRCQEMSTVLEKTDEPGKYTAYSGKQVVYSIPSAVEDHYIFYYEGKIHRHHFQIAKLVGRNPEINQEALEDFQNAVRAGGLNPDNIFIPKQSETCPLGSN</sequence>
<dbReference type="EMBL" id="X74806">
    <property type="protein sequence ID" value="CAA52810.1"/>
    <property type="molecule type" value="mRNA"/>
</dbReference>
<dbReference type="EMBL" id="X74807">
    <property type="protein sequence ID" value="CAA52811.1"/>
    <property type="molecule type" value="Genomic_DNA"/>
</dbReference>
<dbReference type="PIR" id="S43647">
    <property type="entry name" value="S43647"/>
</dbReference>
<dbReference type="RefSeq" id="NP_446026.1">
    <property type="nucleotide sequence ID" value="NM_053574.2"/>
</dbReference>
<dbReference type="SMR" id="P41244"/>
<dbReference type="FunCoup" id="P41244">
    <property type="interactions" value="1"/>
</dbReference>
<dbReference type="STRING" id="10116.ENSRNOP00000043245"/>
<dbReference type="PaxDb" id="10116-ENSRNOP00000043245"/>
<dbReference type="Ensembl" id="ENSRNOT00000042910.5">
    <property type="protein sequence ID" value="ENSRNOP00000041023.4"/>
    <property type="gene ID" value="ENSRNOG00000033761.5"/>
</dbReference>
<dbReference type="GeneID" id="94106"/>
<dbReference type="KEGG" id="rno:94106"/>
<dbReference type="UCSC" id="RGD:620384">
    <property type="organism name" value="rat"/>
</dbReference>
<dbReference type="AGR" id="RGD:620384"/>
<dbReference type="CTD" id="94106"/>
<dbReference type="RGD" id="620384">
    <property type="gene designation" value="Vegp2"/>
</dbReference>
<dbReference type="eggNOG" id="ENOG502S22P">
    <property type="taxonomic scope" value="Eukaryota"/>
</dbReference>
<dbReference type="GeneTree" id="ENSGT01050000244868"/>
<dbReference type="InParanoid" id="P41244"/>
<dbReference type="OMA" id="SGQCQEM"/>
<dbReference type="OrthoDB" id="80611at9989"/>
<dbReference type="PhylomeDB" id="P41244"/>
<dbReference type="TreeFam" id="TF338197"/>
<dbReference type="Reactome" id="R-RNO-804914">
    <property type="pathway name" value="Transport of fatty acids"/>
</dbReference>
<dbReference type="PRO" id="PR:P41244"/>
<dbReference type="Proteomes" id="UP000002494">
    <property type="component" value="Chromosome 3"/>
</dbReference>
<dbReference type="GO" id="GO:0005615">
    <property type="term" value="C:extracellular space"/>
    <property type="evidence" value="ECO:0000318"/>
    <property type="project" value="GO_Central"/>
</dbReference>
<dbReference type="GO" id="GO:0036094">
    <property type="term" value="F:small molecule binding"/>
    <property type="evidence" value="ECO:0007669"/>
    <property type="project" value="InterPro"/>
</dbReference>
<dbReference type="GO" id="GO:0050909">
    <property type="term" value="P:sensory perception of taste"/>
    <property type="evidence" value="ECO:0007669"/>
    <property type="project" value="UniProtKB-KW"/>
</dbReference>
<dbReference type="CDD" id="cd19414">
    <property type="entry name" value="lipocalin_1_3_4_13-like"/>
    <property type="match status" value="1"/>
</dbReference>
<dbReference type="Gene3D" id="2.40.128.20">
    <property type="match status" value="1"/>
</dbReference>
<dbReference type="InterPro" id="IPR012674">
    <property type="entry name" value="Calycin"/>
</dbReference>
<dbReference type="InterPro" id="IPR002345">
    <property type="entry name" value="Lipocalin"/>
</dbReference>
<dbReference type="InterPro" id="IPR000566">
    <property type="entry name" value="Lipocln_cytosolic_FA-bd_dom"/>
</dbReference>
<dbReference type="InterPro" id="IPR002450">
    <property type="entry name" value="von_Ebner_gland"/>
</dbReference>
<dbReference type="PANTHER" id="PTHR11430">
    <property type="entry name" value="LIPOCALIN"/>
    <property type="match status" value="1"/>
</dbReference>
<dbReference type="PANTHER" id="PTHR11430:SF124">
    <property type="entry name" value="LIPOCALIN 1-LIKE PROTEIN 1-RELATED"/>
    <property type="match status" value="1"/>
</dbReference>
<dbReference type="Pfam" id="PF00061">
    <property type="entry name" value="Lipocalin"/>
    <property type="match status" value="1"/>
</dbReference>
<dbReference type="PRINTS" id="PR01175">
    <property type="entry name" value="VNEBNERGLAND"/>
</dbReference>
<dbReference type="SUPFAM" id="SSF50814">
    <property type="entry name" value="Lipocalins"/>
    <property type="match status" value="1"/>
</dbReference>
<gene>
    <name type="primary">Vegp2</name>
</gene>
<proteinExistence type="evidence at protein level"/>
<reference key="1">
    <citation type="journal article" date="1994" name="Eur. J. Biochem.">
        <title>Structural organization of the genes for rat von Ebner's gland proteins 1 and 2 reveals their close relationship to lipocalins.</title>
        <authorList>
            <person name="Kock K."/>
            <person name="Ahlers C."/>
            <person name="Schmale H."/>
        </authorList>
    </citation>
    <scope>NUCLEOTIDE SEQUENCE [GENOMIC DNA / MRNA]</scope>
    <scope>PARTIAL PROTEIN SEQUENCE</scope>
    <source>
        <strain>Wistar</strain>
        <tissue>Lingual salivary gland</tissue>
    </source>
</reference>